<evidence type="ECO:0000255" key="1">
    <source>
        <dbReference type="HAMAP-Rule" id="MF_00071"/>
    </source>
</evidence>
<evidence type="ECO:0000305" key="2"/>
<organism>
    <name type="scientific">Rhodopseudomonas palustris (strain HaA2)</name>
    <dbReference type="NCBI Taxonomy" id="316058"/>
    <lineage>
        <taxon>Bacteria</taxon>
        <taxon>Pseudomonadati</taxon>
        <taxon>Pseudomonadota</taxon>
        <taxon>Alphaproteobacteria</taxon>
        <taxon>Hyphomicrobiales</taxon>
        <taxon>Nitrobacteraceae</taxon>
        <taxon>Rhodopseudomonas</taxon>
    </lineage>
</organism>
<proteinExistence type="inferred from homology"/>
<sequence>MTTAPIDNIRNFSIVAHIDHGKSTLADRLIQITGGMSDREMAGKEQVLDSMDIERERGITIKAQTVRLNYRAKDGKDYIFNLMDTPGHVDFAYEVSRSLAACEGSLLVVDASQGVEAQTLANVYHALDAGHEIVPVLNKVDLPAAEPDKVKQQIEDVIGLDASDAVMISAKTGLGVPDVLEAIVTRLPPPQGDRSAQLKALLVDSWYDVYLGVVVLVRVVDGVMKKGQRIRMMGTNAAYDLERVGYFTPKMTSVDELGPGEIGFITAAIKEVADTRVGDTITDDRKPITEMLPGFKPAIPVVFCGLFPVDADDFETLRGAMGKLRLNDASFSFEMETSAALGFGFRCGFLGLLHLEIIQERLSREFDLNLIATAPSVIYKMTLTDGTEMEIHNPVDMPDVVKIAEIQEPWIEATILTPDEYLGSVLKLCQDRRGNQKELTYVGARAMVKYDLPLNEVVFDFYDRLKSVSKGYASFDYHLTEYKPADLVKMQILVNAEPVDALSMLVHRTRAEGRGRAMVEKMKELIPPHMFVIPIQAAIGGKIIARETVRALRKDVTAKCYGGDITRKRKLLEKQKEGKKKMRQFGKVDIPQEAFIAALKVDS</sequence>
<protein>
    <recommendedName>
        <fullName evidence="1">Elongation factor 4</fullName>
        <shortName evidence="1">EF-4</shortName>
        <ecNumber evidence="1">3.6.5.n1</ecNumber>
    </recommendedName>
    <alternativeName>
        <fullName evidence="1">Ribosomal back-translocase LepA</fullName>
    </alternativeName>
</protein>
<gene>
    <name evidence="1" type="primary">lepA</name>
    <name type="ordered locus">RPB_0469</name>
</gene>
<dbReference type="EC" id="3.6.5.n1" evidence="1"/>
<dbReference type="EMBL" id="CP000250">
    <property type="protein sequence ID" value="ABD05180.1"/>
    <property type="status" value="ALT_INIT"/>
    <property type="molecule type" value="Genomic_DNA"/>
</dbReference>
<dbReference type="RefSeq" id="WP_041797883.1">
    <property type="nucleotide sequence ID" value="NC_007778.1"/>
</dbReference>
<dbReference type="SMR" id="Q2J2Y0"/>
<dbReference type="STRING" id="316058.RPB_0469"/>
<dbReference type="KEGG" id="rpb:RPB_0469"/>
<dbReference type="eggNOG" id="COG0481">
    <property type="taxonomic scope" value="Bacteria"/>
</dbReference>
<dbReference type="HOGENOM" id="CLU_009995_3_3_5"/>
<dbReference type="OrthoDB" id="9802948at2"/>
<dbReference type="Proteomes" id="UP000008809">
    <property type="component" value="Chromosome"/>
</dbReference>
<dbReference type="GO" id="GO:0005886">
    <property type="term" value="C:plasma membrane"/>
    <property type="evidence" value="ECO:0007669"/>
    <property type="project" value="UniProtKB-SubCell"/>
</dbReference>
<dbReference type="GO" id="GO:0005525">
    <property type="term" value="F:GTP binding"/>
    <property type="evidence" value="ECO:0007669"/>
    <property type="project" value="UniProtKB-UniRule"/>
</dbReference>
<dbReference type="GO" id="GO:0003924">
    <property type="term" value="F:GTPase activity"/>
    <property type="evidence" value="ECO:0007669"/>
    <property type="project" value="UniProtKB-UniRule"/>
</dbReference>
<dbReference type="GO" id="GO:0097216">
    <property type="term" value="F:guanosine tetraphosphate binding"/>
    <property type="evidence" value="ECO:0007669"/>
    <property type="project" value="UniProtKB-ARBA"/>
</dbReference>
<dbReference type="GO" id="GO:0043022">
    <property type="term" value="F:ribosome binding"/>
    <property type="evidence" value="ECO:0007669"/>
    <property type="project" value="UniProtKB-UniRule"/>
</dbReference>
<dbReference type="GO" id="GO:0003746">
    <property type="term" value="F:translation elongation factor activity"/>
    <property type="evidence" value="ECO:0007669"/>
    <property type="project" value="UniProtKB-UniRule"/>
</dbReference>
<dbReference type="GO" id="GO:0045727">
    <property type="term" value="P:positive regulation of translation"/>
    <property type="evidence" value="ECO:0007669"/>
    <property type="project" value="UniProtKB-UniRule"/>
</dbReference>
<dbReference type="CDD" id="cd16260">
    <property type="entry name" value="EF4_III"/>
    <property type="match status" value="1"/>
</dbReference>
<dbReference type="CDD" id="cd01890">
    <property type="entry name" value="LepA"/>
    <property type="match status" value="1"/>
</dbReference>
<dbReference type="CDD" id="cd03709">
    <property type="entry name" value="lepA_C"/>
    <property type="match status" value="1"/>
</dbReference>
<dbReference type="FunFam" id="3.40.50.300:FF:000078">
    <property type="entry name" value="Elongation factor 4"/>
    <property type="match status" value="1"/>
</dbReference>
<dbReference type="FunFam" id="2.40.30.10:FF:000015">
    <property type="entry name" value="Translation factor GUF1, mitochondrial"/>
    <property type="match status" value="1"/>
</dbReference>
<dbReference type="FunFam" id="3.30.70.240:FF:000007">
    <property type="entry name" value="Translation factor GUF1, mitochondrial"/>
    <property type="match status" value="1"/>
</dbReference>
<dbReference type="FunFam" id="3.30.70.2570:FF:000001">
    <property type="entry name" value="Translation factor GUF1, mitochondrial"/>
    <property type="match status" value="1"/>
</dbReference>
<dbReference type="FunFam" id="3.30.70.870:FF:000004">
    <property type="entry name" value="Translation factor GUF1, mitochondrial"/>
    <property type="match status" value="1"/>
</dbReference>
<dbReference type="Gene3D" id="3.30.70.240">
    <property type="match status" value="1"/>
</dbReference>
<dbReference type="Gene3D" id="3.30.70.2570">
    <property type="entry name" value="Elongation factor 4, C-terminal domain"/>
    <property type="match status" value="1"/>
</dbReference>
<dbReference type="Gene3D" id="3.30.70.870">
    <property type="entry name" value="Elongation Factor G (Translational Gtpase), domain 3"/>
    <property type="match status" value="1"/>
</dbReference>
<dbReference type="Gene3D" id="3.40.50.300">
    <property type="entry name" value="P-loop containing nucleotide triphosphate hydrolases"/>
    <property type="match status" value="1"/>
</dbReference>
<dbReference type="Gene3D" id="2.40.30.10">
    <property type="entry name" value="Translation factors"/>
    <property type="match status" value="1"/>
</dbReference>
<dbReference type="HAMAP" id="MF_00071">
    <property type="entry name" value="LepA"/>
    <property type="match status" value="1"/>
</dbReference>
<dbReference type="InterPro" id="IPR006297">
    <property type="entry name" value="EF-4"/>
</dbReference>
<dbReference type="InterPro" id="IPR035647">
    <property type="entry name" value="EFG_III/V"/>
</dbReference>
<dbReference type="InterPro" id="IPR000640">
    <property type="entry name" value="EFG_V-like"/>
</dbReference>
<dbReference type="InterPro" id="IPR004161">
    <property type="entry name" value="EFTu-like_2"/>
</dbReference>
<dbReference type="InterPro" id="IPR031157">
    <property type="entry name" value="G_TR_CS"/>
</dbReference>
<dbReference type="InterPro" id="IPR038363">
    <property type="entry name" value="LepA_C_sf"/>
</dbReference>
<dbReference type="InterPro" id="IPR013842">
    <property type="entry name" value="LepA_CTD"/>
</dbReference>
<dbReference type="InterPro" id="IPR035654">
    <property type="entry name" value="LepA_IV"/>
</dbReference>
<dbReference type="InterPro" id="IPR027417">
    <property type="entry name" value="P-loop_NTPase"/>
</dbReference>
<dbReference type="InterPro" id="IPR005225">
    <property type="entry name" value="Small_GTP-bd"/>
</dbReference>
<dbReference type="InterPro" id="IPR000795">
    <property type="entry name" value="T_Tr_GTP-bd_dom"/>
</dbReference>
<dbReference type="NCBIfam" id="TIGR01393">
    <property type="entry name" value="lepA"/>
    <property type="match status" value="1"/>
</dbReference>
<dbReference type="NCBIfam" id="TIGR00231">
    <property type="entry name" value="small_GTP"/>
    <property type="match status" value="1"/>
</dbReference>
<dbReference type="PANTHER" id="PTHR43512:SF4">
    <property type="entry name" value="TRANSLATION FACTOR GUF1 HOMOLOG, CHLOROPLASTIC"/>
    <property type="match status" value="1"/>
</dbReference>
<dbReference type="PANTHER" id="PTHR43512">
    <property type="entry name" value="TRANSLATION FACTOR GUF1-RELATED"/>
    <property type="match status" value="1"/>
</dbReference>
<dbReference type="Pfam" id="PF00679">
    <property type="entry name" value="EFG_C"/>
    <property type="match status" value="1"/>
</dbReference>
<dbReference type="Pfam" id="PF00009">
    <property type="entry name" value="GTP_EFTU"/>
    <property type="match status" value="1"/>
</dbReference>
<dbReference type="Pfam" id="PF03144">
    <property type="entry name" value="GTP_EFTU_D2"/>
    <property type="match status" value="1"/>
</dbReference>
<dbReference type="Pfam" id="PF06421">
    <property type="entry name" value="LepA_C"/>
    <property type="match status" value="1"/>
</dbReference>
<dbReference type="PRINTS" id="PR00315">
    <property type="entry name" value="ELONGATNFCT"/>
</dbReference>
<dbReference type="SMART" id="SM00838">
    <property type="entry name" value="EFG_C"/>
    <property type="match status" value="1"/>
</dbReference>
<dbReference type="SUPFAM" id="SSF54980">
    <property type="entry name" value="EF-G C-terminal domain-like"/>
    <property type="match status" value="2"/>
</dbReference>
<dbReference type="SUPFAM" id="SSF52540">
    <property type="entry name" value="P-loop containing nucleoside triphosphate hydrolases"/>
    <property type="match status" value="1"/>
</dbReference>
<dbReference type="PROSITE" id="PS00301">
    <property type="entry name" value="G_TR_1"/>
    <property type="match status" value="1"/>
</dbReference>
<dbReference type="PROSITE" id="PS51722">
    <property type="entry name" value="G_TR_2"/>
    <property type="match status" value="1"/>
</dbReference>
<keyword id="KW-0997">Cell inner membrane</keyword>
<keyword id="KW-1003">Cell membrane</keyword>
<keyword id="KW-0342">GTP-binding</keyword>
<keyword id="KW-0378">Hydrolase</keyword>
<keyword id="KW-0472">Membrane</keyword>
<keyword id="KW-0547">Nucleotide-binding</keyword>
<keyword id="KW-0648">Protein biosynthesis</keyword>
<keyword id="KW-1185">Reference proteome</keyword>
<feature type="chain" id="PRO_0000265695" description="Elongation factor 4">
    <location>
        <begin position="1"/>
        <end position="603"/>
    </location>
</feature>
<feature type="domain" description="tr-type G">
    <location>
        <begin position="7"/>
        <end position="191"/>
    </location>
</feature>
<feature type="binding site" evidence="1">
    <location>
        <begin position="19"/>
        <end position="24"/>
    </location>
    <ligand>
        <name>GTP</name>
        <dbReference type="ChEBI" id="CHEBI:37565"/>
    </ligand>
</feature>
<feature type="binding site" evidence="1">
    <location>
        <begin position="138"/>
        <end position="141"/>
    </location>
    <ligand>
        <name>GTP</name>
        <dbReference type="ChEBI" id="CHEBI:37565"/>
    </ligand>
</feature>
<name>LEPA_RHOP2</name>
<accession>Q2J2Y0</accession>
<comment type="function">
    <text evidence="1">Required for accurate and efficient protein synthesis under certain stress conditions. May act as a fidelity factor of the translation reaction, by catalyzing a one-codon backward translocation of tRNAs on improperly translocated ribosomes. Back-translocation proceeds from a post-translocation (POST) complex to a pre-translocation (PRE) complex, thus giving elongation factor G a second chance to translocate the tRNAs correctly. Binds to ribosomes in a GTP-dependent manner.</text>
</comment>
<comment type="catalytic activity">
    <reaction evidence="1">
        <text>GTP + H2O = GDP + phosphate + H(+)</text>
        <dbReference type="Rhea" id="RHEA:19669"/>
        <dbReference type="ChEBI" id="CHEBI:15377"/>
        <dbReference type="ChEBI" id="CHEBI:15378"/>
        <dbReference type="ChEBI" id="CHEBI:37565"/>
        <dbReference type="ChEBI" id="CHEBI:43474"/>
        <dbReference type="ChEBI" id="CHEBI:58189"/>
        <dbReference type="EC" id="3.6.5.n1"/>
    </reaction>
</comment>
<comment type="subcellular location">
    <subcellularLocation>
        <location evidence="1">Cell inner membrane</location>
        <topology evidence="1">Peripheral membrane protein</topology>
        <orientation evidence="1">Cytoplasmic side</orientation>
    </subcellularLocation>
</comment>
<comment type="similarity">
    <text evidence="1">Belongs to the TRAFAC class translation factor GTPase superfamily. Classic translation factor GTPase family. LepA subfamily.</text>
</comment>
<comment type="sequence caution" evidence="2">
    <conflict type="erroneous initiation">
        <sequence resource="EMBL-CDS" id="ABD05180"/>
    </conflict>
</comment>
<reference key="1">
    <citation type="submission" date="2006-01" db="EMBL/GenBank/DDBJ databases">
        <title>Complete sequence of Rhodopseudomonas palustris HaA2.</title>
        <authorList>
            <consortium name="US DOE Joint Genome Institute"/>
            <person name="Copeland A."/>
            <person name="Lucas S."/>
            <person name="Lapidus A."/>
            <person name="Barry K."/>
            <person name="Detter J.C."/>
            <person name="Glavina T."/>
            <person name="Hammon N."/>
            <person name="Israni S."/>
            <person name="Pitluck S."/>
            <person name="Chain P."/>
            <person name="Malfatti S."/>
            <person name="Shin M."/>
            <person name="Vergez L."/>
            <person name="Schmutz J."/>
            <person name="Larimer F."/>
            <person name="Land M."/>
            <person name="Hauser L."/>
            <person name="Pelletier D.A."/>
            <person name="Kyrpides N."/>
            <person name="Anderson I."/>
            <person name="Oda Y."/>
            <person name="Harwood C.S."/>
            <person name="Richardson P."/>
        </authorList>
    </citation>
    <scope>NUCLEOTIDE SEQUENCE [LARGE SCALE GENOMIC DNA]</scope>
    <source>
        <strain>HaA2</strain>
    </source>
</reference>